<comment type="function">
    <text>Major matrix protein of the sea urchin embryo spicule. The function of the matrix proteins is to direct crystal growth in certain orientations and inhibit growth in others.</text>
</comment>
<comment type="tissue specificity">
    <text>Expressed specifically in the micromere/primary mesenchyme cells (PMC) lineage.</text>
</comment>
<comment type="developmental stage">
    <text>Detected at hatching blastula, it remains at a certain level from the mesenchyme blastula to the pluteus stages.</text>
</comment>
<comment type="domain">
    <text>The repetitive domain may provide a calcite binding matrix.</text>
</comment>
<comment type="similarity">
    <text evidence="3">Belongs to the SM50 family.</text>
</comment>
<dbReference type="EMBL" id="M16231">
    <property type="protein sequence ID" value="AAA30071.1"/>
    <property type="molecule type" value="Genomic_DNA"/>
</dbReference>
<dbReference type="EMBL" id="M16230">
    <property type="protein sequence ID" value="AAA30071.1"/>
    <property type="status" value="JOINED"/>
    <property type="molecule type" value="Genomic_DNA"/>
</dbReference>
<dbReference type="PIR" id="A27263">
    <property type="entry name" value="A27263"/>
</dbReference>
<dbReference type="STRING" id="7668.P11994"/>
<dbReference type="eggNOG" id="KOG3544">
    <property type="taxonomic scope" value="Eukaryota"/>
</dbReference>
<dbReference type="HOGENOM" id="CLU_674973_0_0_1"/>
<dbReference type="InParanoid" id="P11994"/>
<dbReference type="Proteomes" id="UP000007110">
    <property type="component" value="Unassembled WGS sequence"/>
</dbReference>
<dbReference type="Gene3D" id="3.10.100.10">
    <property type="entry name" value="Mannose-Binding Protein A, subunit A"/>
    <property type="match status" value="1"/>
</dbReference>
<dbReference type="InterPro" id="IPR001304">
    <property type="entry name" value="C-type_lectin-like"/>
</dbReference>
<dbReference type="InterPro" id="IPR016186">
    <property type="entry name" value="C-type_lectin-like/link_sf"/>
</dbReference>
<dbReference type="InterPro" id="IPR016187">
    <property type="entry name" value="CTDL_fold"/>
</dbReference>
<dbReference type="InterPro" id="IPR009765">
    <property type="entry name" value="Pericardin-like_rpt"/>
</dbReference>
<dbReference type="InterPro" id="IPR052890">
    <property type="entry name" value="SM50_spicule_matrix"/>
</dbReference>
<dbReference type="PANTHER" id="PTHR36148:SF3">
    <property type="entry name" value="50 KDA SPICULE MATRIX PROTEIN"/>
    <property type="match status" value="1"/>
</dbReference>
<dbReference type="PANTHER" id="PTHR36148">
    <property type="entry name" value="50 KDA SPICULE MATRIX PROTEIN-RELATED"/>
    <property type="match status" value="1"/>
</dbReference>
<dbReference type="Pfam" id="PF07054">
    <property type="entry name" value="Pericardin_rpt"/>
    <property type="match status" value="5"/>
</dbReference>
<dbReference type="SMART" id="SM00034">
    <property type="entry name" value="CLECT"/>
    <property type="match status" value="1"/>
</dbReference>
<dbReference type="SUPFAM" id="SSF56436">
    <property type="entry name" value="C-type lectin-like"/>
    <property type="match status" value="1"/>
</dbReference>
<dbReference type="PROSITE" id="PS50041">
    <property type="entry name" value="C_TYPE_LECTIN_2"/>
    <property type="match status" value="1"/>
</dbReference>
<feature type="signal peptide">
    <location>
        <begin position="1"/>
        <end position="15"/>
    </location>
</feature>
<feature type="chain" id="PRO_0000017561" description="50 kDa spicule matrix protein">
    <location>
        <begin position="16"/>
        <end position="445"/>
    </location>
</feature>
<feature type="domain" description="C-type lectin" evidence="1">
    <location>
        <begin position="29"/>
        <end position="159"/>
    </location>
</feature>
<feature type="region of interest" description="Disordered" evidence="2">
    <location>
        <begin position="118"/>
        <end position="178"/>
    </location>
</feature>
<feature type="region of interest" description="Disordered" evidence="2">
    <location>
        <begin position="210"/>
        <end position="445"/>
    </location>
</feature>
<feature type="compositionally biased region" description="Gly residues" evidence="2">
    <location>
        <begin position="210"/>
        <end position="299"/>
    </location>
</feature>
<feature type="compositionally biased region" description="Polar residues" evidence="2">
    <location>
        <begin position="309"/>
        <end position="321"/>
    </location>
</feature>
<feature type="compositionally biased region" description="Gly residues" evidence="2">
    <location>
        <begin position="324"/>
        <end position="408"/>
    </location>
</feature>
<feature type="compositionally biased region" description="Pro residues" evidence="2">
    <location>
        <begin position="414"/>
        <end position="428"/>
    </location>
</feature>
<gene>
    <name type="primary">SM50</name>
</gene>
<accession>P11994</accession>
<organism>
    <name type="scientific">Strongylocentrotus purpuratus</name>
    <name type="common">Purple sea urchin</name>
    <dbReference type="NCBI Taxonomy" id="7668"/>
    <lineage>
        <taxon>Eukaryota</taxon>
        <taxon>Metazoa</taxon>
        <taxon>Echinodermata</taxon>
        <taxon>Eleutherozoa</taxon>
        <taxon>Echinozoa</taxon>
        <taxon>Echinoidea</taxon>
        <taxon>Euechinoidea</taxon>
        <taxon>Echinacea</taxon>
        <taxon>Camarodonta</taxon>
        <taxon>Echinidea</taxon>
        <taxon>Strongylocentrotidae</taxon>
        <taxon>Strongylocentrotus</taxon>
    </lineage>
</organism>
<proteinExistence type="evidence at transcript level"/>
<keyword id="KW-1185">Reference proteome</keyword>
<keyword id="KW-0677">Repeat</keyword>
<keyword id="KW-0732">Signal</keyword>
<name>SM50_STRPU</name>
<evidence type="ECO:0000255" key="1">
    <source>
        <dbReference type="PROSITE-ProRule" id="PRU00040"/>
    </source>
</evidence>
<evidence type="ECO:0000256" key="2">
    <source>
        <dbReference type="SAM" id="MobiDB-lite"/>
    </source>
</evidence>
<evidence type="ECO:0000305" key="3"/>
<sequence length="445" mass="46262">MKGVLFIVASLIAFATGQDCPAYYVRSQSGQSCYRYFNMRVPYRMASEFCEMVTPCGNGPAKMGALASVSSPQENMEIYQLVAGFSQDNQMENEVWLGWNSQSPFFWEDGTPAYPNGFAAFSSSPASPPRPGMPPTRSWPVNPQNPMSGPPGRAPVMKRQNPPVRPGQGGRQIPQGVGPQWEAVEVTAMRAFVCEVPAGRNIPIGQQPGMGQGGFGNQQPGMGGRQPGFGNQPGMGGRQPGFGNQPGMGGRQPGWGNQPGVGGRQPGMGGQQPGWGNQPGVGGRQPGMGGQPGVGGRQPGFGNQPGMVDNNQAWWTTTRLGNQPGVGGRQPGMGGQPGVGGRQPGVGGRQPGFGNQPGVGGRQPGMGGQQPGMGGQPGVGGRQPGMGGRQPGFGNQPGVGGRQPGMGGQQPNNPNNPNPNNPNNPNNPNPRFNRPRMLQEADALA</sequence>
<reference key="1">
    <citation type="journal article" date="1987" name="Dev. Biol.">
        <title>A lineage-specific gene encoding a major matrix protein of the sea urchin embryo spicule. II. Structure of the gene and derived sequence of the protein.</title>
        <authorList>
            <person name="Sucov H.M."/>
            <person name="Benson S.C."/>
            <person name="Robinson J.J."/>
            <person name="Britten R.J."/>
            <person name="Wilt F.H."/>
            <person name="Davidson E.H."/>
        </authorList>
    </citation>
    <scope>NUCLEOTIDE SEQUENCE [GENOMIC DNA]</scope>
</reference>
<reference key="2">
    <citation type="journal article" date="1991" name="Dev. Biol.">
        <title>The corrected structure of the SM50 spicule matrix protein of Strongylocentrotus purpuratus.</title>
        <authorList>
            <person name="Katoh-Fukui Y."/>
            <person name="Noce T."/>
            <person name="Ueda T."/>
            <person name="Fujiwara Y."/>
            <person name="Hashimoto N."/>
            <person name="Higashinakagawa T."/>
            <person name="Killian C.E."/>
            <person name="Livingston B.T."/>
            <person name="Wilt F.H."/>
            <person name="Benson S.C."/>
            <person name="Sucov H.M."/>
            <person name="Davidson E.H."/>
        </authorList>
    </citation>
    <scope>SEQUENCE REVISION</scope>
</reference>
<protein>
    <recommendedName>
        <fullName>50 kDa spicule matrix protein</fullName>
    </recommendedName>
</protein>